<name>ASNA_AEDAE</name>
<accession>Q16MG9</accession>
<organism>
    <name type="scientific">Aedes aegypti</name>
    <name type="common">Yellowfever mosquito</name>
    <name type="synonym">Culex aegypti</name>
    <dbReference type="NCBI Taxonomy" id="7159"/>
    <lineage>
        <taxon>Eukaryota</taxon>
        <taxon>Metazoa</taxon>
        <taxon>Ecdysozoa</taxon>
        <taxon>Arthropoda</taxon>
        <taxon>Hexapoda</taxon>
        <taxon>Insecta</taxon>
        <taxon>Pterygota</taxon>
        <taxon>Neoptera</taxon>
        <taxon>Endopterygota</taxon>
        <taxon>Diptera</taxon>
        <taxon>Nematocera</taxon>
        <taxon>Culicoidea</taxon>
        <taxon>Culicidae</taxon>
        <taxon>Culicinae</taxon>
        <taxon>Aedini</taxon>
        <taxon>Aedes</taxon>
        <taxon>Stegomyia</taxon>
    </lineage>
</organism>
<sequence length="341" mass="38192">MDTDFEPLAPSLENIIDQETLKWVFVGGKGGVGKTTCSCSLAVQLAKVRESVLIISTDPAHNISDAFDQKFTKVPTKVNGFNNLFAMEIDPNVGLNELPDEYFEGENSAMKLSKGVFQEIIGALPGIDEAMSYAEVMKLVKAMNFSVVVFDTAPTGHTLRLLSFPQVVEKGLGKLLMLKMKLAPFISQMGSLFGMQDFNADTLTGKLEEMLTIIRQVNEQFRNPDQTTFVCVCIAEFLSLYETERLVQELTKCGIDTHNIIVNQLLFRREGQAPCAMCSARYKVQGKYLDQIADLYEDFYVVKLPLLDKEVRGVENVKKFSEYLIKPYCPNGTNETQEQDK</sequence>
<evidence type="ECO:0000255" key="1">
    <source>
        <dbReference type="HAMAP-Rule" id="MF_03112"/>
    </source>
</evidence>
<feature type="chain" id="PRO_0000388145" description="ATPase ASNA1 homolog">
    <location>
        <begin position="1"/>
        <end position="341"/>
    </location>
</feature>
<feature type="active site" evidence="1">
    <location>
        <position position="58"/>
    </location>
</feature>
<feature type="binding site" evidence="1">
    <location>
        <begin position="29"/>
        <end position="36"/>
    </location>
    <ligand>
        <name>ATP</name>
        <dbReference type="ChEBI" id="CHEBI:30616"/>
    </ligand>
</feature>
<feature type="binding site" evidence="1">
    <location>
        <position position="236"/>
    </location>
    <ligand>
        <name>ATP</name>
        <dbReference type="ChEBI" id="CHEBI:30616"/>
    </ligand>
</feature>
<feature type="binding site" evidence="1">
    <location>
        <position position="263"/>
    </location>
    <ligand>
        <name>ATP</name>
        <dbReference type="ChEBI" id="CHEBI:30616"/>
    </ligand>
</feature>
<feature type="binding site" evidence="1">
    <location>
        <position position="275"/>
    </location>
    <ligand>
        <name>Zn(2+)</name>
        <dbReference type="ChEBI" id="CHEBI:29105"/>
        <note>ligand shared between dimeric partners</note>
    </ligand>
</feature>
<feature type="binding site" evidence="1">
    <location>
        <position position="278"/>
    </location>
    <ligand>
        <name>Zn(2+)</name>
        <dbReference type="ChEBI" id="CHEBI:29105"/>
        <note>ligand shared between dimeric partners</note>
    </ligand>
</feature>
<reference key="1">
    <citation type="journal article" date="2007" name="Science">
        <title>Genome sequence of Aedes aegypti, a major arbovirus vector.</title>
        <authorList>
            <person name="Nene V."/>
            <person name="Wortman J.R."/>
            <person name="Lawson D."/>
            <person name="Haas B.J."/>
            <person name="Kodira C.D."/>
            <person name="Tu Z.J."/>
            <person name="Loftus B.J."/>
            <person name="Xi Z."/>
            <person name="Megy K."/>
            <person name="Grabherr M."/>
            <person name="Ren Q."/>
            <person name="Zdobnov E.M."/>
            <person name="Lobo N.F."/>
            <person name="Campbell K.S."/>
            <person name="Brown S.E."/>
            <person name="Bonaldo M.F."/>
            <person name="Zhu J."/>
            <person name="Sinkins S.P."/>
            <person name="Hogenkamp D.G."/>
            <person name="Amedeo P."/>
            <person name="Arensburger P."/>
            <person name="Atkinson P.W."/>
            <person name="Bidwell S.L."/>
            <person name="Biedler J."/>
            <person name="Birney E."/>
            <person name="Bruggner R.V."/>
            <person name="Costas J."/>
            <person name="Coy M.R."/>
            <person name="Crabtree J."/>
            <person name="Crawford M."/>
            <person name="DeBruyn B."/>
            <person name="DeCaprio D."/>
            <person name="Eiglmeier K."/>
            <person name="Eisenstadt E."/>
            <person name="El-Dorry H."/>
            <person name="Gelbart W.M."/>
            <person name="Gomes S.L."/>
            <person name="Hammond M."/>
            <person name="Hannick L.I."/>
            <person name="Hogan J.R."/>
            <person name="Holmes M.H."/>
            <person name="Jaffe D."/>
            <person name="Johnston S.J."/>
            <person name="Kennedy R.C."/>
            <person name="Koo H."/>
            <person name="Kravitz S."/>
            <person name="Kriventseva E.V."/>
            <person name="Kulp D."/>
            <person name="Labutti K."/>
            <person name="Lee E."/>
            <person name="Li S."/>
            <person name="Lovin D.D."/>
            <person name="Mao C."/>
            <person name="Mauceli E."/>
            <person name="Menck C.F."/>
            <person name="Miller J.R."/>
            <person name="Montgomery P."/>
            <person name="Mori A."/>
            <person name="Nascimento A.L."/>
            <person name="Naveira H.F."/>
            <person name="Nusbaum C."/>
            <person name="O'Leary S.B."/>
            <person name="Orvis J."/>
            <person name="Pertea M."/>
            <person name="Quesneville H."/>
            <person name="Reidenbach K.R."/>
            <person name="Rogers Y.-H.C."/>
            <person name="Roth C.W."/>
            <person name="Schneider J.R."/>
            <person name="Schatz M."/>
            <person name="Shumway M."/>
            <person name="Stanke M."/>
            <person name="Stinson E.O."/>
            <person name="Tubio J.M.C."/>
            <person name="Vanzee J.P."/>
            <person name="Verjovski-Almeida S."/>
            <person name="Werner D."/>
            <person name="White O.R."/>
            <person name="Wyder S."/>
            <person name="Zeng Q."/>
            <person name="Zhao Q."/>
            <person name="Zhao Y."/>
            <person name="Hill C.A."/>
            <person name="Raikhel A.S."/>
            <person name="Soares M.B."/>
            <person name="Knudson D.L."/>
            <person name="Lee N.H."/>
            <person name="Galagan J."/>
            <person name="Salzberg S.L."/>
            <person name="Paulsen I.T."/>
            <person name="Dimopoulos G."/>
            <person name="Collins F.H."/>
            <person name="Bruce B."/>
            <person name="Fraser-Liggett C.M."/>
            <person name="Severson D.W."/>
        </authorList>
    </citation>
    <scope>NUCLEOTIDE SEQUENCE [LARGE SCALE GENOMIC DNA]</scope>
    <source>
        <strain>LVPib12</strain>
    </source>
</reference>
<protein>
    <recommendedName>
        <fullName evidence="1">ATPase ASNA1 homolog</fullName>
        <ecNumber evidence="1">3.6.-.-</ecNumber>
    </recommendedName>
    <alternativeName>
        <fullName evidence="1">Arsenical pump-driving ATPase homolog</fullName>
    </alternativeName>
    <alternativeName>
        <fullName evidence="1">Arsenite-stimulated ATPase</fullName>
    </alternativeName>
</protein>
<comment type="function">
    <text evidence="1">ATPase required for the post-translational delivery of tail-anchored (TA) proteins to the endoplasmic reticulum. Recognizes and selectively binds the transmembrane domain of TA proteins in the cytosol. This complex then targets to the endoplasmic reticulum by membrane-bound receptors, where the tail-anchored protein is released for insertion. This process is regulated by ATP binding and hydrolysis. ATP binding drives the homodimer towards the closed dimer state, facilitating recognition of newly synthesized TA membrane proteins. ATP hydrolysis is required for insertion. Subsequently, the homodimer reverts towards the open dimer state, lowering its affinity for the membrane-bound receptor, and returning it to the cytosol to initiate a new round of targeting.</text>
</comment>
<comment type="subunit">
    <text evidence="1">Homodimer.</text>
</comment>
<comment type="subcellular location">
    <subcellularLocation>
        <location evidence="1">Cytoplasm</location>
    </subcellularLocation>
    <subcellularLocation>
        <location evidence="1">Endoplasmic reticulum</location>
    </subcellularLocation>
</comment>
<comment type="similarity">
    <text evidence="1">Belongs to the arsA ATPase family.</text>
</comment>
<keyword id="KW-0067">ATP-binding</keyword>
<keyword id="KW-0963">Cytoplasm</keyword>
<keyword id="KW-0256">Endoplasmic reticulum</keyword>
<keyword id="KW-0378">Hydrolase</keyword>
<keyword id="KW-0479">Metal-binding</keyword>
<keyword id="KW-0547">Nucleotide-binding</keyword>
<keyword id="KW-1185">Reference proteome</keyword>
<keyword id="KW-0813">Transport</keyword>
<keyword id="KW-0862">Zinc</keyword>
<gene>
    <name type="ORF">AAEL011136</name>
</gene>
<gene>
    <name type="ORF">AAEL012316</name>
</gene>
<dbReference type="EC" id="3.6.-.-" evidence="1"/>
<dbReference type="EMBL" id="CH477862">
    <property type="protein sequence ID" value="EAT35519.1"/>
    <property type="molecule type" value="Genomic_DNA"/>
</dbReference>
<dbReference type="EMBL" id="CH477728">
    <property type="protein sequence ID" value="EAT36805.1"/>
    <property type="molecule type" value="Genomic_DNA"/>
</dbReference>
<dbReference type="RefSeq" id="XP_001662407.1">
    <property type="nucleotide sequence ID" value="XM_001662357.1"/>
</dbReference>
<dbReference type="SMR" id="Q16MG9"/>
<dbReference type="FunCoup" id="Q16MG9">
    <property type="interactions" value="1987"/>
</dbReference>
<dbReference type="STRING" id="7159.Q16MG9"/>
<dbReference type="PaxDb" id="7159-AAEL011136-PA"/>
<dbReference type="EnsemblMetazoa" id="AAEL011136-RB">
    <property type="protein sequence ID" value="AAEL011136-PB"/>
    <property type="gene ID" value="AAEL011136"/>
</dbReference>
<dbReference type="GeneID" id="5574421"/>
<dbReference type="KEGG" id="aag:5574421"/>
<dbReference type="VEuPathDB" id="VectorBase:AAEL011136"/>
<dbReference type="eggNOG" id="KOG2825">
    <property type="taxonomic scope" value="Eukaryota"/>
</dbReference>
<dbReference type="HOGENOM" id="CLU_040761_0_0_1"/>
<dbReference type="InParanoid" id="Q16MG9"/>
<dbReference type="OMA" id="MDAPYEF"/>
<dbReference type="OrthoDB" id="1770at2759"/>
<dbReference type="PhylomeDB" id="Q16MG9"/>
<dbReference type="Proteomes" id="UP000008820">
    <property type="component" value="Chromosome 2"/>
</dbReference>
<dbReference type="Proteomes" id="UP000682892">
    <property type="component" value="Chromosome 2"/>
</dbReference>
<dbReference type="Proteomes" id="UP000682892">
    <property type="component" value="Unassembled WGS sequence"/>
</dbReference>
<dbReference type="GO" id="GO:0043529">
    <property type="term" value="C:GET complex"/>
    <property type="evidence" value="ECO:0007669"/>
    <property type="project" value="TreeGrafter"/>
</dbReference>
<dbReference type="GO" id="GO:0005524">
    <property type="term" value="F:ATP binding"/>
    <property type="evidence" value="ECO:0007669"/>
    <property type="project" value="UniProtKB-UniRule"/>
</dbReference>
<dbReference type="GO" id="GO:0016887">
    <property type="term" value="F:ATP hydrolysis activity"/>
    <property type="evidence" value="ECO:0007669"/>
    <property type="project" value="InterPro"/>
</dbReference>
<dbReference type="GO" id="GO:0046872">
    <property type="term" value="F:metal ion binding"/>
    <property type="evidence" value="ECO:0007669"/>
    <property type="project" value="UniProtKB-KW"/>
</dbReference>
<dbReference type="GO" id="GO:0071816">
    <property type="term" value="P:tail-anchored membrane protein insertion into ER membrane"/>
    <property type="evidence" value="ECO:0007669"/>
    <property type="project" value="TreeGrafter"/>
</dbReference>
<dbReference type="CDD" id="cd02035">
    <property type="entry name" value="ArsA"/>
    <property type="match status" value="1"/>
</dbReference>
<dbReference type="FunFam" id="3.40.50.300:FF:000235">
    <property type="entry name" value="ATPase ASNA1"/>
    <property type="match status" value="1"/>
</dbReference>
<dbReference type="Gene3D" id="3.40.50.300">
    <property type="entry name" value="P-loop containing nucleotide triphosphate hydrolases"/>
    <property type="match status" value="1"/>
</dbReference>
<dbReference type="HAMAP" id="MF_03112">
    <property type="entry name" value="Asna1_Get3"/>
    <property type="match status" value="1"/>
</dbReference>
<dbReference type="InterPro" id="IPR025723">
    <property type="entry name" value="Anion-transp_ATPase-like_dom"/>
</dbReference>
<dbReference type="InterPro" id="IPR016300">
    <property type="entry name" value="ATPase_ArsA/GET3"/>
</dbReference>
<dbReference type="InterPro" id="IPR027542">
    <property type="entry name" value="ATPase_ArsA/GET3_euk"/>
</dbReference>
<dbReference type="InterPro" id="IPR027417">
    <property type="entry name" value="P-loop_NTPase"/>
</dbReference>
<dbReference type="NCBIfam" id="TIGR00345">
    <property type="entry name" value="GET3_arsA_TRC40"/>
    <property type="match status" value="1"/>
</dbReference>
<dbReference type="PANTHER" id="PTHR10803">
    <property type="entry name" value="ARSENICAL PUMP-DRIVING ATPASE ARSENITE-TRANSLOCATING ATPASE"/>
    <property type="match status" value="1"/>
</dbReference>
<dbReference type="PANTHER" id="PTHR10803:SF3">
    <property type="entry name" value="ATPASE GET3"/>
    <property type="match status" value="1"/>
</dbReference>
<dbReference type="Pfam" id="PF02374">
    <property type="entry name" value="ArsA_ATPase"/>
    <property type="match status" value="1"/>
</dbReference>
<dbReference type="SUPFAM" id="SSF52540">
    <property type="entry name" value="P-loop containing nucleoside triphosphate hydrolases"/>
    <property type="match status" value="1"/>
</dbReference>
<proteinExistence type="inferred from homology"/>